<feature type="signal peptide" evidence="2">
    <location>
        <begin position="1"/>
        <end position="21"/>
    </location>
</feature>
<feature type="propeptide" id="PRO_0000452234" evidence="1">
    <location>
        <begin position="22"/>
        <end position="27"/>
    </location>
</feature>
<feature type="peptide" id="PRO_0000452235" description="Peptide HSTX-XI" evidence="1">
    <location>
        <begin position="25"/>
        <end position="48"/>
    </location>
</feature>
<feature type="modified residue" description="Leucine amide" evidence="1">
    <location>
        <position position="48"/>
    </location>
</feature>
<feature type="disulfide bond" evidence="1">
    <location>
        <begin position="26"/>
        <end position="38"/>
    </location>
</feature>
<feature type="disulfide bond" evidence="1">
    <location>
        <begin position="32"/>
        <end position="43"/>
    </location>
</feature>
<organism>
    <name type="scientific">Haemadipsa sylvestris</name>
    <name type="common">Indian leech</name>
    <dbReference type="NCBI Taxonomy" id="13555"/>
    <lineage>
        <taxon>Eukaryota</taxon>
        <taxon>Metazoa</taxon>
        <taxon>Spiralia</taxon>
        <taxon>Lophotrochozoa</taxon>
        <taxon>Annelida</taxon>
        <taxon>Clitellata</taxon>
        <taxon>Hirudinea</taxon>
        <taxon>Hirudinida</taxon>
        <taxon>Hirudiniformes</taxon>
        <taxon>Haemadipsidae</taxon>
        <taxon>Haemadipsa</taxon>
    </lineage>
</organism>
<dbReference type="GO" id="GO:0005576">
    <property type="term" value="C:extracellular region"/>
    <property type="evidence" value="ECO:0007669"/>
    <property type="project" value="UniProtKB-SubCell"/>
</dbReference>
<reference key="1">
    <citation type="journal article" date="2018" name="Front. Pharmacol.">
        <title>Novel sodium channel inhibitor from leeches.</title>
        <authorList>
            <person name="Wang G."/>
            <person name="Long C."/>
            <person name="Liu W."/>
            <person name="Xu C."/>
            <person name="Zhang M."/>
            <person name="Li Q."/>
            <person name="Lu Q."/>
            <person name="Meng P."/>
            <person name="Li D."/>
            <person name="Rong M."/>
            <person name="Sun Z."/>
            <person name="Luo X."/>
            <person name="Lai R."/>
        </authorList>
    </citation>
    <scope>NUCLEOTIDE SEQUENCE [MRNA]</scope>
    <source>
        <tissue>Salivary gland</tissue>
    </source>
</reference>
<accession>P0DUH4</accession>
<sequence>MKTLLVFLLLAILVAVLIGNIQVEACKDLTECDTFDICVKGRCYPSTLG</sequence>
<name>HSTXB_HAESL</name>
<comment type="function">
    <text evidence="1">Leech salivary gland peptide with unknown function.</text>
</comment>
<comment type="subcellular location">
    <subcellularLocation>
        <location evidence="1">Secreted</location>
    </subcellularLocation>
</comment>
<comment type="tissue specificity">
    <text evidence="1">Expressed in salivary glands. Highly expressed in the head, body and tail with a 2-3-fold higher expression in the head.</text>
</comment>
<comment type="miscellaneous">
    <text evidence="1">Does not show effect on voltage-gated calcium channels, potassium channels, and tetrodotoxin-sensitive sodium channels. Does not show activity on Nav1.7/SCN9A, and shows very weak activity on cation channel TRPA1.</text>
</comment>
<comment type="similarity">
    <text evidence="4">Belongs to the annelide toxin family.</text>
</comment>
<evidence type="ECO:0000250" key="1">
    <source>
        <dbReference type="UniProtKB" id="A0A2L1DGG0"/>
    </source>
</evidence>
<evidence type="ECO:0000255" key="2"/>
<evidence type="ECO:0000303" key="3">
    <source>
    </source>
</evidence>
<evidence type="ECO:0000305" key="4"/>
<proteinExistence type="inferred from homology"/>
<protein>
    <recommendedName>
        <fullName evidence="3">Peptide HSTX-XI</fullName>
    </recommendedName>
</protein>
<keyword id="KW-0027">Amidation</keyword>
<keyword id="KW-1015">Disulfide bond</keyword>
<keyword id="KW-0964">Secreted</keyword>
<keyword id="KW-0732">Signal</keyword>